<evidence type="ECO:0000255" key="1"/>
<evidence type="ECO:0000255" key="2">
    <source>
        <dbReference type="PROSITE-ProRule" id="PRU00303"/>
    </source>
</evidence>
<evidence type="ECO:0000269" key="3">
    <source>
    </source>
</evidence>
<evidence type="ECO:0000269" key="4">
    <source>
    </source>
</evidence>
<evidence type="ECO:0000269" key="5">
    <source>
    </source>
</evidence>
<evidence type="ECO:0000305" key="6"/>
<organism>
    <name type="scientific">Salmonella typhimurium (strain LT2 / SGSC1412 / ATCC 700720)</name>
    <dbReference type="NCBI Taxonomy" id="99287"/>
    <lineage>
        <taxon>Bacteria</taxon>
        <taxon>Pseudomonadati</taxon>
        <taxon>Pseudomonadota</taxon>
        <taxon>Gammaproteobacteria</taxon>
        <taxon>Enterobacterales</taxon>
        <taxon>Enterobacteriaceae</taxon>
        <taxon>Salmonella</taxon>
    </lineage>
</organism>
<accession>P74852</accession>
<reference key="1">
    <citation type="journal article" date="1997" name="Mol. Microbiol.">
        <title>Functional analysis of ssaJ and the ssaK/U operon, 13 genes encoding components of the type III secretion apparatus of Salmonella pathogenicity island 2.</title>
        <authorList>
            <person name="Hensel M."/>
            <person name="Shea J.E."/>
            <person name="Raupach B."/>
            <person name="Monack D."/>
            <person name="Falkow S."/>
            <person name="Gleeson C."/>
            <person name="Kubo T."/>
            <person name="Holden D.W."/>
        </authorList>
    </citation>
    <scope>NUCLEOTIDE SEQUENCE [GENOMIC DNA]</scope>
    <source>
        <strain>LT2</strain>
    </source>
</reference>
<reference key="2">
    <citation type="journal article" date="2001" name="Nature">
        <title>Complete genome sequence of Salmonella enterica serovar Typhimurium LT2.</title>
        <authorList>
            <person name="McClelland M."/>
            <person name="Sanderson K.E."/>
            <person name="Spieth J."/>
            <person name="Clifton S.W."/>
            <person name="Latreille P."/>
            <person name="Courtney L."/>
            <person name="Porwollik S."/>
            <person name="Ali J."/>
            <person name="Dante M."/>
            <person name="Du F."/>
            <person name="Hou S."/>
            <person name="Layman D."/>
            <person name="Leonard S."/>
            <person name="Nguyen C."/>
            <person name="Scott K."/>
            <person name="Holmes A."/>
            <person name="Grewal N."/>
            <person name="Mulvaney E."/>
            <person name="Ryan E."/>
            <person name="Sun H."/>
            <person name="Florea L."/>
            <person name="Miller W."/>
            <person name="Stoneking T."/>
            <person name="Nhan M."/>
            <person name="Waterston R."/>
            <person name="Wilson R.K."/>
        </authorList>
    </citation>
    <scope>NUCLEOTIDE SEQUENCE [LARGE SCALE GENOMIC DNA]</scope>
    <source>
        <strain>LT2 / SGSC1412 / ATCC 700720</strain>
    </source>
</reference>
<reference key="3">
    <citation type="journal article" date="1998" name="Mol. Microbiol.">
        <title>Macrophage-dependent induction of the Salmonella pathogenicity island 2 type III secretion system and its role in intracellular survival.</title>
        <authorList>
            <person name="Cirillo D.M."/>
            <person name="Valdivia R.H."/>
            <person name="Monack D.M."/>
            <person name="Falkow S."/>
        </authorList>
    </citation>
    <scope>INDUCTION</scope>
</reference>
<reference key="4">
    <citation type="journal article" date="1999" name="Mol. Microbiol.">
        <title>Environmental regulation of Salmonella pathogenicity island 2 gene expression.</title>
        <authorList>
            <person name="Deiwick J."/>
            <person name="Nikolaus T."/>
            <person name="Erdogan S."/>
            <person name="Hensel M."/>
        </authorList>
    </citation>
    <scope>INDUCTION</scope>
</reference>
<reference key="5">
    <citation type="journal article" date="2008" name="FEMS Immunol. Med. Microbiol.">
        <title>Identification of Salmonella SPI-2 secretion system components required for SpvB-mediated cytotoxicity in macrophages and virulence in mice.</title>
        <authorList>
            <person name="Browne S.H."/>
            <person name="Hasegawa P."/>
            <person name="Okamoto S."/>
            <person name="Fierer J."/>
            <person name="Guiney D.G."/>
        </authorList>
    </citation>
    <scope>ROLE IN SPVB EXPORT</scope>
    <scope>DISRUPTION PHENOTYPE</scope>
    <source>
        <strain>LT2 / SGSC1412 / ATCC 700720</strain>
    </source>
</reference>
<name>SSAJ_SALTY</name>
<protein>
    <recommendedName>
        <fullName>Secretion system apparatus lipoprotein SsaJ</fullName>
    </recommendedName>
</protein>
<comment type="function">
    <text evidence="4">Component of Salmonella pathogenicity island 2 (SPI-2) type III secretion system, required for secretion of some type III-secreted effectors including the SpvB toxin.</text>
</comment>
<comment type="subcellular location">
    <subcellularLocation>
        <location evidence="6">Cell outer membrane</location>
        <topology evidence="6">Lipid-anchor</topology>
    </subcellularLocation>
</comment>
<comment type="induction">
    <text evidence="3 5">Induced in low magnesium (PubMed:10209748). Induced in macrophages (PubMed:10209748, PubMed:9786194). Expression in host cells is dependent on an acidic environment (PubMed:9786194).</text>
</comment>
<comment type="disruption phenotype">
    <text evidence="4">Disruption prevents SpvB-induced F-actin depolymerization in human macrophages without affecting intra-bacterial SpvB protein levels.</text>
</comment>
<comment type="similarity">
    <text evidence="6">Belongs to the YscJ lipoprotein family.</text>
</comment>
<gene>
    <name type="primary">ssaJ</name>
    <name type="ordered locus">STM1409</name>
</gene>
<keyword id="KW-0998">Cell outer membrane</keyword>
<keyword id="KW-0449">Lipoprotein</keyword>
<keyword id="KW-0472">Membrane</keyword>
<keyword id="KW-0564">Palmitate</keyword>
<keyword id="KW-0653">Protein transport</keyword>
<keyword id="KW-1185">Reference proteome</keyword>
<keyword id="KW-0732">Signal</keyword>
<keyword id="KW-0812">Transmembrane</keyword>
<keyword id="KW-1133">Transmembrane helix</keyword>
<keyword id="KW-0813">Transport</keyword>
<feature type="signal peptide" evidence="2">
    <location>
        <begin position="1"/>
        <end position="18"/>
    </location>
</feature>
<feature type="chain" id="PRO_0000018229" description="Secretion system apparatus lipoprotein SsaJ">
    <location>
        <begin position="19"/>
        <end position="249"/>
    </location>
</feature>
<feature type="transmembrane region" description="Helical" evidence="1">
    <location>
        <begin position="225"/>
        <end position="245"/>
    </location>
</feature>
<feature type="lipid moiety-binding region" description="N-palmitoyl cysteine" evidence="2">
    <location>
        <position position="19"/>
    </location>
</feature>
<feature type="lipid moiety-binding region" description="S-diacylglycerol cysteine" evidence="2">
    <location>
        <position position="19"/>
    </location>
</feature>
<proteinExistence type="evidence at transcript level"/>
<sequence>MKVHRIVFLTVLTFFLTACDVDLYRSLPEDEANQMLALLMQHHIDAEKKQEEDGVTLRVEQSQFINAVELLRLNGYPHRQFTTADKMFPANQLVVSPQEEQQKINFLKEQRIEGMLSQMEGVINAKVTIALPTYDEGSNASPSSVAVFIKYSPQVNMEAFRVKIKDLIEMSIPGLQYSKISILMQPAEFRMVADVPARQTFWIMDVINANKGKVVKWLMKYPYPLMLSLTGLLLGVGILIGYFCLRRRF</sequence>
<dbReference type="EMBL" id="Y09357">
    <property type="protein sequence ID" value="CAA70532.1"/>
    <property type="molecule type" value="Genomic_DNA"/>
</dbReference>
<dbReference type="EMBL" id="AE006468">
    <property type="protein sequence ID" value="AAL20333.1"/>
    <property type="molecule type" value="Genomic_DNA"/>
</dbReference>
<dbReference type="RefSeq" id="NP_460374.1">
    <property type="nucleotide sequence ID" value="NC_003197.2"/>
</dbReference>
<dbReference type="RefSeq" id="WP_000862874.1">
    <property type="nucleotide sequence ID" value="NC_003197.2"/>
</dbReference>
<dbReference type="SMR" id="P74852"/>
<dbReference type="STRING" id="99287.STM1409"/>
<dbReference type="PaxDb" id="99287-STM1409"/>
<dbReference type="GeneID" id="1252927"/>
<dbReference type="KEGG" id="stm:STM1409"/>
<dbReference type="PATRIC" id="fig|99287.12.peg.1493"/>
<dbReference type="HOGENOM" id="CLU_073268_1_0_6"/>
<dbReference type="OMA" id="PREQFST"/>
<dbReference type="PhylomeDB" id="P74852"/>
<dbReference type="BioCyc" id="SENT99287:STM1409-MONOMER"/>
<dbReference type="Proteomes" id="UP000001014">
    <property type="component" value="Chromosome"/>
</dbReference>
<dbReference type="GO" id="GO:0009279">
    <property type="term" value="C:cell outer membrane"/>
    <property type="evidence" value="ECO:0007669"/>
    <property type="project" value="UniProtKB-SubCell"/>
</dbReference>
<dbReference type="GO" id="GO:0009306">
    <property type="term" value="P:protein secretion"/>
    <property type="evidence" value="ECO:0007669"/>
    <property type="project" value="InterPro"/>
</dbReference>
<dbReference type="Gene3D" id="3.30.300.30">
    <property type="match status" value="1"/>
</dbReference>
<dbReference type="Gene3D" id="3.30.70.1530">
    <property type="entry name" value="Hypothetical protein rpa1041"/>
    <property type="match status" value="1"/>
</dbReference>
<dbReference type="InterPro" id="IPR045851">
    <property type="entry name" value="AMP-bd_C_sf"/>
</dbReference>
<dbReference type="InterPro" id="IPR006182">
    <property type="entry name" value="FliF_N_dom"/>
</dbReference>
<dbReference type="InterPro" id="IPR003282">
    <property type="entry name" value="T3SS_SctJ"/>
</dbReference>
<dbReference type="InterPro" id="IPR043427">
    <property type="entry name" value="YscJ/FliF"/>
</dbReference>
<dbReference type="NCBIfam" id="TIGR02544">
    <property type="entry name" value="III_secr_YscJ"/>
    <property type="match status" value="1"/>
</dbReference>
<dbReference type="NCBIfam" id="NF011875">
    <property type="entry name" value="PRK15348.1"/>
    <property type="match status" value="1"/>
</dbReference>
<dbReference type="PANTHER" id="PTHR30046">
    <property type="entry name" value="FLAGELLAR M-RING PROTEIN"/>
    <property type="match status" value="1"/>
</dbReference>
<dbReference type="PANTHER" id="PTHR30046:SF3">
    <property type="entry name" value="SECRETION SYSTEM APPARATUS LIPOPROTEIN SSAJ"/>
    <property type="match status" value="1"/>
</dbReference>
<dbReference type="Pfam" id="PF01514">
    <property type="entry name" value="YscJ_FliF"/>
    <property type="match status" value="1"/>
</dbReference>
<dbReference type="PRINTS" id="PR01338">
    <property type="entry name" value="TYPE3OMKPROT"/>
</dbReference>
<dbReference type="PROSITE" id="PS51257">
    <property type="entry name" value="PROKAR_LIPOPROTEIN"/>
    <property type="match status" value="1"/>
</dbReference>